<reference key="1">
    <citation type="journal article" date="2005" name="Pharmacogenet. Genomics">
        <title>Thiopurine S-methyltransferase pharmacogenetics: variant allele functional and comparative genomics.</title>
        <authorList>
            <person name="Salavaggione O.E."/>
            <person name="Wang L."/>
            <person name="Wiepert M."/>
            <person name="Yee V.C."/>
            <person name="Weinshilboum R.M."/>
        </authorList>
    </citation>
    <scope>NUCLEOTIDE SEQUENCE [MRNA]</scope>
</reference>
<proteinExistence type="evidence at transcript level"/>
<comment type="catalytic activity">
    <reaction evidence="2">
        <text>S-adenosyl-L-methionine + a thiopurine = S-adenosyl-L-homocysteine + a thiopurine S-methylether.</text>
        <dbReference type="EC" id="2.1.1.67"/>
    </reaction>
</comment>
<comment type="subunit">
    <text evidence="2">Monomer.</text>
</comment>
<comment type="subcellular location">
    <subcellularLocation>
        <location>Cytoplasm</location>
    </subcellularLocation>
</comment>
<comment type="similarity">
    <text evidence="3">Belongs to the class I-like SAM-binding methyltransferase superfamily. TPMT family.</text>
</comment>
<evidence type="ECO:0000250" key="1"/>
<evidence type="ECO:0000250" key="2">
    <source>
        <dbReference type="UniProtKB" id="P51580"/>
    </source>
</evidence>
<evidence type="ECO:0000305" key="3"/>
<dbReference type="EC" id="2.1.1.67"/>
<dbReference type="EMBL" id="AY827076">
    <property type="protein sequence ID" value="AAX37640.1"/>
    <property type="molecule type" value="mRNA"/>
</dbReference>
<dbReference type="RefSeq" id="NP_001075374.1">
    <property type="nucleotide sequence ID" value="NM_001081905.1"/>
</dbReference>
<dbReference type="SMR" id="Q3BCR6"/>
<dbReference type="FunCoup" id="Q3BCR6">
    <property type="interactions" value="227"/>
</dbReference>
<dbReference type="STRING" id="9796.ENSECAP00000033580"/>
<dbReference type="PeptideAtlas" id="Q3BCR6"/>
<dbReference type="GeneID" id="100034066"/>
<dbReference type="KEGG" id="ecb:100034066"/>
<dbReference type="CTD" id="7172"/>
<dbReference type="InParanoid" id="Q3BCR6"/>
<dbReference type="OrthoDB" id="276151at2759"/>
<dbReference type="Proteomes" id="UP000002281">
    <property type="component" value="Unplaced"/>
</dbReference>
<dbReference type="GO" id="GO:0005737">
    <property type="term" value="C:cytoplasm"/>
    <property type="evidence" value="ECO:0007669"/>
    <property type="project" value="UniProtKB-SubCell"/>
</dbReference>
<dbReference type="GO" id="GO:0008119">
    <property type="term" value="F:thiopurine S-methyltransferase activity"/>
    <property type="evidence" value="ECO:0000318"/>
    <property type="project" value="GO_Central"/>
</dbReference>
<dbReference type="GO" id="GO:0032259">
    <property type="term" value="P:methylation"/>
    <property type="evidence" value="ECO:0007669"/>
    <property type="project" value="UniProtKB-KW"/>
</dbReference>
<dbReference type="FunFam" id="3.40.50.150:FF:000101">
    <property type="entry name" value="Thiopurine S-methyltransferase"/>
    <property type="match status" value="1"/>
</dbReference>
<dbReference type="Gene3D" id="3.40.50.150">
    <property type="entry name" value="Vaccinia Virus protein VP39"/>
    <property type="match status" value="1"/>
</dbReference>
<dbReference type="HAMAP" id="MF_00812">
    <property type="entry name" value="Thiopur_methtran"/>
    <property type="match status" value="1"/>
</dbReference>
<dbReference type="InterPro" id="IPR029063">
    <property type="entry name" value="SAM-dependent_MTases_sf"/>
</dbReference>
<dbReference type="InterPro" id="IPR025835">
    <property type="entry name" value="Thiopurine_S-MeTrfase"/>
</dbReference>
<dbReference type="InterPro" id="IPR008854">
    <property type="entry name" value="TPMT"/>
</dbReference>
<dbReference type="PANTHER" id="PTHR10259">
    <property type="entry name" value="THIOPURINE S-METHYLTRANSFERASE"/>
    <property type="match status" value="1"/>
</dbReference>
<dbReference type="PANTHER" id="PTHR10259:SF11">
    <property type="entry name" value="THIOPURINE S-METHYLTRANSFERASE"/>
    <property type="match status" value="1"/>
</dbReference>
<dbReference type="Pfam" id="PF05724">
    <property type="entry name" value="TPMT"/>
    <property type="match status" value="1"/>
</dbReference>
<dbReference type="PIRSF" id="PIRSF023956">
    <property type="entry name" value="Thiopurine_S-methyltransferase"/>
    <property type="match status" value="1"/>
</dbReference>
<dbReference type="SUPFAM" id="SSF53335">
    <property type="entry name" value="S-adenosyl-L-methionine-dependent methyltransferases"/>
    <property type="match status" value="1"/>
</dbReference>
<dbReference type="PROSITE" id="PS51585">
    <property type="entry name" value="SAM_MT_TPMT"/>
    <property type="match status" value="1"/>
</dbReference>
<sequence>MDGTRTVLDIKEYSDSEVQKNRVLTLEEWQGKWVTGKTIFHQEQGHQLLKKHLDAFLKGESGLKVFFPLCGKAVEMKWFADRGHSVVGVEISELGIREFFTEQNLSYSEEPIIEIPGAKVFKSSSGNISLYCCNIFDLPRTNIGKFDRIWDRGALVAVNPGDRKRYVDIMLSLTRKGFHYLLAVLSYDPTKHAGPPFFVSDAEVKRLFDSVCNIRCLEKVDALEERHKSWGIDYLVETLYLFTEK</sequence>
<keyword id="KW-0007">Acetylation</keyword>
<keyword id="KW-0963">Cytoplasm</keyword>
<keyword id="KW-0489">Methyltransferase</keyword>
<keyword id="KW-0597">Phosphoprotein</keyword>
<keyword id="KW-1185">Reference proteome</keyword>
<keyword id="KW-0949">S-adenosyl-L-methionine</keyword>
<keyword id="KW-0808">Transferase</keyword>
<accession>Q3BCR6</accession>
<protein>
    <recommendedName>
        <fullName>Thiopurine S-methyltransferase</fullName>
        <ecNumber>2.1.1.67</ecNumber>
    </recommendedName>
    <alternativeName>
        <fullName>Thiopurine methyltransferase</fullName>
    </alternativeName>
</protein>
<feature type="chain" id="PRO_0000220101" description="Thiopurine S-methyltransferase">
    <location>
        <begin position="1"/>
        <end position="245"/>
    </location>
</feature>
<feature type="binding site" evidence="1">
    <location>
        <begin position="29"/>
        <end position="40"/>
    </location>
    <ligand>
        <name>S-adenosyl-L-methionine</name>
        <dbReference type="ChEBI" id="CHEBI:59789"/>
    </ligand>
</feature>
<feature type="binding site" evidence="1">
    <location>
        <position position="40"/>
    </location>
    <ligand>
        <name>substrate</name>
    </ligand>
</feature>
<feature type="binding site" evidence="1">
    <location>
        <position position="69"/>
    </location>
    <ligand>
        <name>S-adenosyl-L-methionine</name>
        <dbReference type="ChEBI" id="CHEBI:59789"/>
    </ligand>
</feature>
<feature type="binding site" evidence="1">
    <location>
        <position position="90"/>
    </location>
    <ligand>
        <name>S-adenosyl-L-methionine</name>
        <dbReference type="ChEBI" id="CHEBI:59789"/>
    </ligand>
</feature>
<feature type="binding site" evidence="1">
    <location>
        <position position="152"/>
    </location>
    <ligand>
        <name>S-adenosyl-L-methionine</name>
        <dbReference type="ChEBI" id="CHEBI:59789"/>
    </ligand>
</feature>
<feature type="modified residue" description="Phosphoserine" evidence="2">
    <location>
        <position position="14"/>
    </location>
</feature>
<feature type="modified residue" description="N6-acetyllysine" evidence="2">
    <location>
        <position position="58"/>
    </location>
</feature>
<organism>
    <name type="scientific">Equus caballus</name>
    <name type="common">Horse</name>
    <dbReference type="NCBI Taxonomy" id="9796"/>
    <lineage>
        <taxon>Eukaryota</taxon>
        <taxon>Metazoa</taxon>
        <taxon>Chordata</taxon>
        <taxon>Craniata</taxon>
        <taxon>Vertebrata</taxon>
        <taxon>Euteleostomi</taxon>
        <taxon>Mammalia</taxon>
        <taxon>Eutheria</taxon>
        <taxon>Laurasiatheria</taxon>
        <taxon>Perissodactyla</taxon>
        <taxon>Equidae</taxon>
        <taxon>Equus</taxon>
    </lineage>
</organism>
<name>TPMT_HORSE</name>
<gene>
    <name type="primary">TPMT</name>
</gene>